<feature type="chain" id="PRO_0000119042" description="Uncharacterized ZPR1-like protein PH1223">
    <location>
        <begin position="1"/>
        <end position="223"/>
    </location>
</feature>
<feature type="zinc finger region" description="C4-type">
    <location>
        <begin position="33"/>
        <end position="67"/>
    </location>
</feature>
<proteinExistence type="inferred from homology"/>
<sequence length="223" mass="25466">MIYKACIRKRCGGVCVGEELKPEKIQEIRLGDCPICGGKGTLKAIQFIHRIPYFGEVMESTVVCERCGYRNSDVIILEEREPRLYEVKVEEEKDLFIRVVRSKSGTIELEELGIKIEPGPAAEGFVSNIEGVLERAKEVLLMARDFKEQENDREAVRRIDELLKYIEEVKEGKKPLTVRIMDPFGNSALIGEKVKSRKLTKEEIRKLSKGPYIVIEPDEVPQQ</sequence>
<keyword id="KW-0479">Metal-binding</keyword>
<keyword id="KW-0862">Zinc</keyword>
<keyword id="KW-0863">Zinc-finger</keyword>
<dbReference type="EMBL" id="BA000001">
    <property type="protein sequence ID" value="BAA30323.1"/>
    <property type="molecule type" value="Genomic_DNA"/>
</dbReference>
<dbReference type="PIR" id="A71066">
    <property type="entry name" value="A71066"/>
</dbReference>
<dbReference type="RefSeq" id="WP_010885309.1">
    <property type="nucleotide sequence ID" value="NC_000961.1"/>
</dbReference>
<dbReference type="SMR" id="O58960"/>
<dbReference type="STRING" id="70601.gene:9378185"/>
<dbReference type="EnsemblBacteria" id="BAA30323">
    <property type="protein sequence ID" value="BAA30323"/>
    <property type="gene ID" value="BAA30323"/>
</dbReference>
<dbReference type="GeneID" id="1443544"/>
<dbReference type="KEGG" id="pho:PH1223"/>
<dbReference type="eggNOG" id="arCOG04265">
    <property type="taxonomic scope" value="Archaea"/>
</dbReference>
<dbReference type="OrthoDB" id="14924at2157"/>
<dbReference type="Proteomes" id="UP000000752">
    <property type="component" value="Chromosome"/>
</dbReference>
<dbReference type="GO" id="GO:0008270">
    <property type="term" value="F:zinc ion binding"/>
    <property type="evidence" value="ECO:0007669"/>
    <property type="project" value="UniProtKB-KW"/>
</dbReference>
<dbReference type="FunFam" id="2.20.25.420:FF:000006">
    <property type="entry name" value="Zn finger containing protein"/>
    <property type="match status" value="1"/>
</dbReference>
<dbReference type="FunFam" id="2.60.120.1040:FF:000008">
    <property type="entry name" value="Zn finger containing protein"/>
    <property type="match status" value="1"/>
</dbReference>
<dbReference type="Gene3D" id="2.60.120.1040">
    <property type="entry name" value="ZPR1, A/B domain"/>
    <property type="match status" value="1"/>
</dbReference>
<dbReference type="Gene3D" id="2.20.25.420">
    <property type="entry name" value="ZPR1, zinc finger domain"/>
    <property type="match status" value="1"/>
</dbReference>
<dbReference type="InterPro" id="IPR004457">
    <property type="entry name" value="Znf_ZPR1"/>
</dbReference>
<dbReference type="InterPro" id="IPR040141">
    <property type="entry name" value="ZPR1"/>
</dbReference>
<dbReference type="InterPro" id="IPR004470">
    <property type="entry name" value="ZPR1-like_arc"/>
</dbReference>
<dbReference type="InterPro" id="IPR042451">
    <property type="entry name" value="ZPR1_A/B_dom"/>
</dbReference>
<dbReference type="InterPro" id="IPR056180">
    <property type="entry name" value="ZPR1_jr_dom"/>
</dbReference>
<dbReference type="InterPro" id="IPR042452">
    <property type="entry name" value="ZPR1_Znf1/2"/>
</dbReference>
<dbReference type="NCBIfam" id="TIGR00340">
    <property type="entry name" value="zpr1_rel"/>
    <property type="match status" value="1"/>
</dbReference>
<dbReference type="NCBIfam" id="TIGR00310">
    <property type="entry name" value="ZPR1_znf"/>
    <property type="match status" value="1"/>
</dbReference>
<dbReference type="PANTHER" id="PTHR10876">
    <property type="entry name" value="ZINC FINGER PROTEIN ZPR1"/>
    <property type="match status" value="1"/>
</dbReference>
<dbReference type="PANTHER" id="PTHR10876:SF0">
    <property type="entry name" value="ZINC FINGER PROTEIN ZPR1"/>
    <property type="match status" value="1"/>
</dbReference>
<dbReference type="Pfam" id="PF22794">
    <property type="entry name" value="jr-ZPR1"/>
    <property type="match status" value="1"/>
</dbReference>
<dbReference type="Pfam" id="PF03367">
    <property type="entry name" value="Zn_ribbon_ZPR1"/>
    <property type="match status" value="1"/>
</dbReference>
<dbReference type="SMART" id="SM00709">
    <property type="entry name" value="Zpr1"/>
    <property type="match status" value="1"/>
</dbReference>
<accession>O58960</accession>
<reference key="1">
    <citation type="journal article" date="1998" name="DNA Res.">
        <title>Complete sequence and gene organization of the genome of a hyper-thermophilic archaebacterium, Pyrococcus horikoshii OT3.</title>
        <authorList>
            <person name="Kawarabayasi Y."/>
            <person name="Sawada M."/>
            <person name="Horikawa H."/>
            <person name="Haikawa Y."/>
            <person name="Hino Y."/>
            <person name="Yamamoto S."/>
            <person name="Sekine M."/>
            <person name="Baba S."/>
            <person name="Kosugi H."/>
            <person name="Hosoyama A."/>
            <person name="Nagai Y."/>
            <person name="Sakai M."/>
            <person name="Ogura K."/>
            <person name="Otsuka R."/>
            <person name="Nakazawa H."/>
            <person name="Takamiya M."/>
            <person name="Ohfuku Y."/>
            <person name="Funahashi T."/>
            <person name="Tanaka T."/>
            <person name="Kudoh Y."/>
            <person name="Yamazaki J."/>
            <person name="Kushida N."/>
            <person name="Oguchi A."/>
            <person name="Aoki K."/>
            <person name="Yoshizawa T."/>
            <person name="Nakamura Y."/>
            <person name="Robb F.T."/>
            <person name="Horikoshi K."/>
            <person name="Masuchi Y."/>
            <person name="Shizuya H."/>
            <person name="Kikuchi H."/>
        </authorList>
    </citation>
    <scope>NUCLEOTIDE SEQUENCE [LARGE SCALE GENOMIC DNA]</scope>
    <source>
        <strain>ATCC 700860 / DSM 12428 / JCM 9974 / NBRC 100139 / OT-3</strain>
    </source>
</reference>
<gene>
    <name type="ordered locus">PH1223</name>
</gene>
<evidence type="ECO:0000305" key="1"/>
<comment type="similarity">
    <text evidence="1">Belongs to the ZPR1 family.</text>
</comment>
<name>Y1223_PYRHO</name>
<organism>
    <name type="scientific">Pyrococcus horikoshii (strain ATCC 700860 / DSM 12428 / JCM 9974 / NBRC 100139 / OT-3)</name>
    <dbReference type="NCBI Taxonomy" id="70601"/>
    <lineage>
        <taxon>Archaea</taxon>
        <taxon>Methanobacteriati</taxon>
        <taxon>Methanobacteriota</taxon>
        <taxon>Thermococci</taxon>
        <taxon>Thermococcales</taxon>
        <taxon>Thermococcaceae</taxon>
        <taxon>Pyrococcus</taxon>
    </lineage>
</organism>
<protein>
    <recommendedName>
        <fullName>Uncharacterized ZPR1-like protein PH1223</fullName>
    </recommendedName>
</protein>